<organism>
    <name type="scientific">Emericella nidulans (strain FGSC A4 / ATCC 38163 / CBS 112.46 / NRRL 194 / M139)</name>
    <name type="common">Aspergillus nidulans</name>
    <dbReference type="NCBI Taxonomy" id="227321"/>
    <lineage>
        <taxon>Eukaryota</taxon>
        <taxon>Fungi</taxon>
        <taxon>Dikarya</taxon>
        <taxon>Ascomycota</taxon>
        <taxon>Pezizomycotina</taxon>
        <taxon>Eurotiomycetes</taxon>
        <taxon>Eurotiomycetidae</taxon>
        <taxon>Eurotiales</taxon>
        <taxon>Aspergillaceae</taxon>
        <taxon>Aspergillus</taxon>
        <taxon>Aspergillus subgen. Nidulantes</taxon>
    </lineage>
</organism>
<reference key="1">
    <citation type="journal article" date="2005" name="Nature">
        <title>Sequencing of Aspergillus nidulans and comparative analysis with A. fumigatus and A. oryzae.</title>
        <authorList>
            <person name="Galagan J.E."/>
            <person name="Calvo S.E."/>
            <person name="Cuomo C."/>
            <person name="Ma L.-J."/>
            <person name="Wortman J.R."/>
            <person name="Batzoglou S."/>
            <person name="Lee S.-I."/>
            <person name="Bastuerkmen M."/>
            <person name="Spevak C.C."/>
            <person name="Clutterbuck J."/>
            <person name="Kapitonov V."/>
            <person name="Jurka J."/>
            <person name="Scazzocchio C."/>
            <person name="Farman M.L."/>
            <person name="Butler J."/>
            <person name="Purcell S."/>
            <person name="Harris S."/>
            <person name="Braus G.H."/>
            <person name="Draht O."/>
            <person name="Busch S."/>
            <person name="D'Enfert C."/>
            <person name="Bouchier C."/>
            <person name="Goldman G.H."/>
            <person name="Bell-Pedersen D."/>
            <person name="Griffiths-Jones S."/>
            <person name="Doonan J.H."/>
            <person name="Yu J."/>
            <person name="Vienken K."/>
            <person name="Pain A."/>
            <person name="Freitag M."/>
            <person name="Selker E.U."/>
            <person name="Archer D.B."/>
            <person name="Penalva M.A."/>
            <person name="Oakley B.R."/>
            <person name="Momany M."/>
            <person name="Tanaka T."/>
            <person name="Kumagai T."/>
            <person name="Asai K."/>
            <person name="Machida M."/>
            <person name="Nierman W.C."/>
            <person name="Denning D.W."/>
            <person name="Caddick M.X."/>
            <person name="Hynes M."/>
            <person name="Paoletti M."/>
            <person name="Fischer R."/>
            <person name="Miller B.L."/>
            <person name="Dyer P.S."/>
            <person name="Sachs M.S."/>
            <person name="Osmani S.A."/>
            <person name="Birren B.W."/>
        </authorList>
    </citation>
    <scope>NUCLEOTIDE SEQUENCE [LARGE SCALE GENOMIC DNA]</scope>
    <source>
        <strain>FGSC A4 / ATCC 38163 / CBS 112.46 / NRRL 194 / M139</strain>
    </source>
</reference>
<reference key="2">
    <citation type="journal article" date="2009" name="Fungal Genet. Biol.">
        <title>The 2008 update of the Aspergillus nidulans genome annotation: a community effort.</title>
        <authorList>
            <person name="Wortman J.R."/>
            <person name="Gilsenan J.M."/>
            <person name="Joardar V."/>
            <person name="Deegan J."/>
            <person name="Clutterbuck J."/>
            <person name="Andersen M.R."/>
            <person name="Archer D."/>
            <person name="Bencina M."/>
            <person name="Braus G."/>
            <person name="Coutinho P."/>
            <person name="von Dohren H."/>
            <person name="Doonan J."/>
            <person name="Driessen A.J."/>
            <person name="Durek P."/>
            <person name="Espeso E."/>
            <person name="Fekete E."/>
            <person name="Flipphi M."/>
            <person name="Estrada C.G."/>
            <person name="Geysens S."/>
            <person name="Goldman G."/>
            <person name="de Groot P.W."/>
            <person name="Hansen K."/>
            <person name="Harris S.D."/>
            <person name="Heinekamp T."/>
            <person name="Helmstaedt K."/>
            <person name="Henrissat B."/>
            <person name="Hofmann G."/>
            <person name="Homan T."/>
            <person name="Horio T."/>
            <person name="Horiuchi H."/>
            <person name="James S."/>
            <person name="Jones M."/>
            <person name="Karaffa L."/>
            <person name="Karanyi Z."/>
            <person name="Kato M."/>
            <person name="Keller N."/>
            <person name="Kelly D.E."/>
            <person name="Kiel J.A."/>
            <person name="Kim J.M."/>
            <person name="van der Klei I.J."/>
            <person name="Klis F.M."/>
            <person name="Kovalchuk A."/>
            <person name="Krasevec N."/>
            <person name="Kubicek C.P."/>
            <person name="Liu B."/>
            <person name="Maccabe A."/>
            <person name="Meyer V."/>
            <person name="Mirabito P."/>
            <person name="Miskei M."/>
            <person name="Mos M."/>
            <person name="Mullins J."/>
            <person name="Nelson D.R."/>
            <person name="Nielsen J."/>
            <person name="Oakley B.R."/>
            <person name="Osmani S.A."/>
            <person name="Pakula T."/>
            <person name="Paszewski A."/>
            <person name="Paulsen I."/>
            <person name="Pilsyk S."/>
            <person name="Pocsi I."/>
            <person name="Punt P.J."/>
            <person name="Ram A.F."/>
            <person name="Ren Q."/>
            <person name="Robellet X."/>
            <person name="Robson G."/>
            <person name="Seiboth B."/>
            <person name="van Solingen P."/>
            <person name="Specht T."/>
            <person name="Sun J."/>
            <person name="Taheri-Talesh N."/>
            <person name="Takeshita N."/>
            <person name="Ussery D."/>
            <person name="vanKuyk P.A."/>
            <person name="Visser H."/>
            <person name="van de Vondervoort P.J."/>
            <person name="de Vries R.P."/>
            <person name="Walton J."/>
            <person name="Xiang X."/>
            <person name="Xiong Y."/>
            <person name="Zeng A.P."/>
            <person name="Brandt B.W."/>
            <person name="Cornell M.J."/>
            <person name="van den Hondel C.A."/>
            <person name="Visser J."/>
            <person name="Oliver S.G."/>
            <person name="Turner G."/>
        </authorList>
    </citation>
    <scope>GENOME REANNOTATION</scope>
    <source>
        <strain>FGSC A4 / ATCC 38163 / CBS 112.46 / NRRL 194 / M139</strain>
    </source>
</reference>
<sequence>MPAFPSKTYRRATTASSTLGEKLGEAYRARLPRHPFLLFGLPFIMVIVAGSFVLTPATALRYERYDRKVKQLSQEEAMDLGLKGPDGEEGIKRNPRRRIIGDDREEYYRLMAKDLDSWEQKRVQRFKGEPDGRL</sequence>
<dbReference type="EMBL" id="AACD01000117">
    <property type="protein sequence ID" value="EAA61627.1"/>
    <property type="status" value="ALT_SEQ"/>
    <property type="molecule type" value="Genomic_DNA"/>
</dbReference>
<dbReference type="EMBL" id="BN001304">
    <property type="protein sequence ID" value="CBF79329.1"/>
    <property type="molecule type" value="Genomic_DNA"/>
</dbReference>
<dbReference type="RefSeq" id="XP_664585.1">
    <property type="nucleotide sequence ID" value="XM_659493.1"/>
</dbReference>
<dbReference type="FunCoup" id="Q5AXJ9">
    <property type="interactions" value="136"/>
</dbReference>
<dbReference type="STRING" id="227321.Q5AXJ9"/>
<dbReference type="EnsemblFungi" id="CBF79329">
    <property type="protein sequence ID" value="CBF79329"/>
    <property type="gene ID" value="ANIA_10871"/>
</dbReference>
<dbReference type="KEGG" id="ani:ANIA_10881"/>
<dbReference type="VEuPathDB" id="FungiDB:AN10871"/>
<dbReference type="eggNOG" id="ENOG502S9GT">
    <property type="taxonomic scope" value="Eukaryota"/>
</dbReference>
<dbReference type="HOGENOM" id="CLU_1503421_0_0_1"/>
<dbReference type="InParanoid" id="Q5AXJ9"/>
<dbReference type="OMA" id="VNMKDEY"/>
<dbReference type="OrthoDB" id="5516033at2759"/>
<dbReference type="Proteomes" id="UP000000560">
    <property type="component" value="Chromosome IV"/>
</dbReference>
<dbReference type="GO" id="GO:0005743">
    <property type="term" value="C:mitochondrial inner membrane"/>
    <property type="evidence" value="ECO:0000318"/>
    <property type="project" value="GO_Central"/>
</dbReference>
<dbReference type="GO" id="GO:0033617">
    <property type="term" value="P:mitochondrial cytochrome c oxidase assembly"/>
    <property type="evidence" value="ECO:0000318"/>
    <property type="project" value="GO_Central"/>
</dbReference>
<dbReference type="InterPro" id="IPR020164">
    <property type="entry name" value="Cyt_c_Oxase_assmbl_COX16"/>
</dbReference>
<dbReference type="PANTHER" id="PTHR17130:SF14">
    <property type="entry name" value="CYTOCHROME C OXIDASE ASSEMBLY PROTEIN COX16 HOMOLOG, MITOCHONDRIAL"/>
    <property type="match status" value="1"/>
</dbReference>
<dbReference type="PANTHER" id="PTHR17130">
    <property type="entry name" value="MITOCHONDRIAL OUTER MEMBRANE PROTEIN 25"/>
    <property type="match status" value="1"/>
</dbReference>
<dbReference type="Pfam" id="PF14138">
    <property type="entry name" value="COX16"/>
    <property type="match status" value="1"/>
</dbReference>
<protein>
    <recommendedName>
        <fullName>Cytochrome c oxidase assembly protein cox16, mitochondrial</fullName>
    </recommendedName>
</protein>
<gene>
    <name type="primary">cox16</name>
    <name type="ORF">AN10871</name>
</gene>
<evidence type="ECO:0000250" key="1">
    <source>
        <dbReference type="UniProtKB" id="P47081"/>
    </source>
</evidence>
<evidence type="ECO:0000255" key="2"/>
<evidence type="ECO:0000305" key="3"/>
<name>COX16_EMENI</name>
<accession>Q5AXJ9</accession>
<accession>C8VB83</accession>
<feature type="transit peptide" description="Mitochondrion" evidence="2">
    <location>
        <begin position="1"/>
        <end position="12"/>
    </location>
</feature>
<feature type="chain" id="PRO_0000280647" description="Cytochrome c oxidase assembly protein cox16, mitochondrial">
    <location>
        <begin position="13"/>
        <end position="134"/>
    </location>
</feature>
<feature type="transmembrane region" description="Helical" evidence="2">
    <location>
        <begin position="35"/>
        <end position="55"/>
    </location>
</feature>
<comment type="function">
    <text evidence="1">Required for the assembly of the mitochondrial respiratory chain complex IV (CIV), also known as cytochrome c oxidase. May participate in merging the COX1 and COX2 assembly lines.</text>
</comment>
<comment type="subcellular location">
    <subcellularLocation>
        <location evidence="1">Mitochondrion inner membrane</location>
        <topology evidence="1">Single-pass membrane protein</topology>
    </subcellularLocation>
</comment>
<comment type="similarity">
    <text evidence="3">Belongs to the COX16 family.</text>
</comment>
<comment type="sequence caution" evidence="3">
    <conflict type="erroneous gene model prediction">
        <sequence resource="EMBL-CDS" id="EAA61627"/>
    </conflict>
</comment>
<keyword id="KW-0472">Membrane</keyword>
<keyword id="KW-0496">Mitochondrion</keyword>
<keyword id="KW-0999">Mitochondrion inner membrane</keyword>
<keyword id="KW-1185">Reference proteome</keyword>
<keyword id="KW-0809">Transit peptide</keyword>
<keyword id="KW-0812">Transmembrane</keyword>
<keyword id="KW-1133">Transmembrane helix</keyword>
<proteinExistence type="inferred from homology"/>